<reference key="1">
    <citation type="journal article" date="1995" name="Plant Mol. Biol. Rep.">
        <title>Complete nucleotide sequence of the Porphyra purpurea chloroplast genome.</title>
        <authorList>
            <person name="Reith M.E."/>
            <person name="Munholland J."/>
        </authorList>
    </citation>
    <scope>NUCLEOTIDE SEQUENCE [LARGE SCALE GENOMIC DNA]</scope>
    <source>
        <strain>Avonport</strain>
    </source>
</reference>
<feature type="chain" id="PRO_0000217354" description="Uncharacterized protein ycf36">
    <location>
        <begin position="1"/>
        <end position="165"/>
    </location>
</feature>
<comment type="subcellular location">
    <subcellularLocation>
        <location>Plastid</location>
        <location>Chloroplast</location>
    </subcellularLocation>
</comment>
<comment type="similarity">
    <text evidence="1">Belongs to the ycf36 family.</text>
</comment>
<keyword id="KW-0150">Chloroplast</keyword>
<keyword id="KW-0934">Plastid</keyword>
<sequence>MNLYNNQCPVPLEQQPVNEYNSLKNSWFFCWPTLSSHSYNKKITITLIATCFLVSPVLLSIFPIAKLPLKFFFSEFIISSLITCFILIRLYLGWSYVVKRLMSATVFYEESGWYDGQIWVKPSEILVKDRFIGLYEVFPLLNKIKNTLSCLSLMTTAPAILFFYF</sequence>
<organism>
    <name type="scientific">Porphyra purpurea</name>
    <name type="common">Red seaweed</name>
    <name type="synonym">Ulva purpurea</name>
    <dbReference type="NCBI Taxonomy" id="2787"/>
    <lineage>
        <taxon>Eukaryota</taxon>
        <taxon>Rhodophyta</taxon>
        <taxon>Bangiophyceae</taxon>
        <taxon>Bangiales</taxon>
        <taxon>Bangiaceae</taxon>
        <taxon>Porphyra</taxon>
    </lineage>
</organism>
<accession>P51273</accession>
<gene>
    <name type="primary">ycf36</name>
</gene>
<evidence type="ECO:0000305" key="1"/>
<name>YCF36_PORPU</name>
<dbReference type="EMBL" id="U38804">
    <property type="protein sequence ID" value="AAC08159.1"/>
    <property type="molecule type" value="Genomic_DNA"/>
</dbReference>
<dbReference type="PIR" id="S73194">
    <property type="entry name" value="S73194"/>
</dbReference>
<dbReference type="RefSeq" id="NP_053883.1">
    <property type="nucleotide sequence ID" value="NC_000925.1"/>
</dbReference>
<dbReference type="GeneID" id="809903"/>
<dbReference type="GO" id="GO:0009507">
    <property type="term" value="C:chloroplast"/>
    <property type="evidence" value="ECO:0007669"/>
    <property type="project" value="UniProtKB-SubCell"/>
</dbReference>
<dbReference type="InterPro" id="IPR009631">
    <property type="entry name" value="CGLD27-like"/>
</dbReference>
<dbReference type="PANTHER" id="PTHR34214">
    <property type="match status" value="1"/>
</dbReference>
<dbReference type="PANTHER" id="PTHR34214:SF3">
    <property type="entry name" value="PROTEIN CONSERVED IN THE GREEN LINEAGE AND DIATOMS 27, CHLOROPLASTIC"/>
    <property type="match status" value="1"/>
</dbReference>
<dbReference type="Pfam" id="PF06799">
    <property type="entry name" value="CGLD27-like"/>
    <property type="match status" value="1"/>
</dbReference>
<protein>
    <recommendedName>
        <fullName>Uncharacterized protein ycf36</fullName>
    </recommendedName>
</protein>
<proteinExistence type="inferred from homology"/>
<geneLocation type="chloroplast"/>